<comment type="function">
    <text evidence="1">Allows the formation of correctly charged Asn-tRNA(Asn) or Gln-tRNA(Gln) through the transamidation of misacylated Asp-tRNA(Asn) or Glu-tRNA(Gln) in organisms which lack either or both of asparaginyl-tRNA or glutaminyl-tRNA synthetases. The reaction takes place in the presence of glutamine and ATP through an activated phospho-Asp-tRNA(Asn) or phospho-Glu-tRNA(Gln).</text>
</comment>
<comment type="catalytic activity">
    <reaction evidence="1">
        <text>L-glutamyl-tRNA(Gln) + L-glutamine + ATP + H2O = L-glutaminyl-tRNA(Gln) + L-glutamate + ADP + phosphate + H(+)</text>
        <dbReference type="Rhea" id="RHEA:17521"/>
        <dbReference type="Rhea" id="RHEA-COMP:9681"/>
        <dbReference type="Rhea" id="RHEA-COMP:9684"/>
        <dbReference type="ChEBI" id="CHEBI:15377"/>
        <dbReference type="ChEBI" id="CHEBI:15378"/>
        <dbReference type="ChEBI" id="CHEBI:29985"/>
        <dbReference type="ChEBI" id="CHEBI:30616"/>
        <dbReference type="ChEBI" id="CHEBI:43474"/>
        <dbReference type="ChEBI" id="CHEBI:58359"/>
        <dbReference type="ChEBI" id="CHEBI:78520"/>
        <dbReference type="ChEBI" id="CHEBI:78521"/>
        <dbReference type="ChEBI" id="CHEBI:456216"/>
    </reaction>
</comment>
<comment type="catalytic activity">
    <reaction evidence="1">
        <text>L-aspartyl-tRNA(Asn) + L-glutamine + ATP + H2O = L-asparaginyl-tRNA(Asn) + L-glutamate + ADP + phosphate + 2 H(+)</text>
        <dbReference type="Rhea" id="RHEA:14513"/>
        <dbReference type="Rhea" id="RHEA-COMP:9674"/>
        <dbReference type="Rhea" id="RHEA-COMP:9677"/>
        <dbReference type="ChEBI" id="CHEBI:15377"/>
        <dbReference type="ChEBI" id="CHEBI:15378"/>
        <dbReference type="ChEBI" id="CHEBI:29985"/>
        <dbReference type="ChEBI" id="CHEBI:30616"/>
        <dbReference type="ChEBI" id="CHEBI:43474"/>
        <dbReference type="ChEBI" id="CHEBI:58359"/>
        <dbReference type="ChEBI" id="CHEBI:78515"/>
        <dbReference type="ChEBI" id="CHEBI:78516"/>
        <dbReference type="ChEBI" id="CHEBI:456216"/>
    </reaction>
</comment>
<comment type="subunit">
    <text evidence="1">Heterotrimer of A, B and C subunits.</text>
</comment>
<comment type="similarity">
    <text evidence="1">Belongs to the GatB/GatE family. GatB subfamily.</text>
</comment>
<proteinExistence type="inferred from homology"/>
<feature type="chain" id="PRO_0000241198" description="Aspartyl/glutamyl-tRNA(Asn/Gln) amidotransferase subunit B">
    <location>
        <begin position="1"/>
        <end position="485"/>
    </location>
</feature>
<evidence type="ECO:0000255" key="1">
    <source>
        <dbReference type="HAMAP-Rule" id="MF_00121"/>
    </source>
</evidence>
<protein>
    <recommendedName>
        <fullName evidence="1">Aspartyl/glutamyl-tRNA(Asn/Gln) amidotransferase subunit B</fullName>
        <shortName evidence="1">Asp/Glu-ADT subunit B</shortName>
        <ecNumber evidence="1">6.3.5.-</ecNumber>
    </recommendedName>
</protein>
<organism>
    <name type="scientific">Bordetella avium (strain 197N)</name>
    <dbReference type="NCBI Taxonomy" id="360910"/>
    <lineage>
        <taxon>Bacteria</taxon>
        <taxon>Pseudomonadati</taxon>
        <taxon>Pseudomonadota</taxon>
        <taxon>Betaproteobacteria</taxon>
        <taxon>Burkholderiales</taxon>
        <taxon>Alcaligenaceae</taxon>
        <taxon>Bordetella</taxon>
    </lineage>
</organism>
<dbReference type="EC" id="6.3.5.-" evidence="1"/>
<dbReference type="EMBL" id="AM167904">
    <property type="protein sequence ID" value="CAJ50789.1"/>
    <property type="molecule type" value="Genomic_DNA"/>
</dbReference>
<dbReference type="RefSeq" id="WP_012418817.1">
    <property type="nucleotide sequence ID" value="NC_010645.1"/>
</dbReference>
<dbReference type="SMR" id="Q2KU71"/>
<dbReference type="STRING" id="360910.BAV3179"/>
<dbReference type="KEGG" id="bav:BAV3179"/>
<dbReference type="eggNOG" id="COG0064">
    <property type="taxonomic scope" value="Bacteria"/>
</dbReference>
<dbReference type="HOGENOM" id="CLU_019240_0_0_4"/>
<dbReference type="OrthoDB" id="9804078at2"/>
<dbReference type="Proteomes" id="UP000001977">
    <property type="component" value="Chromosome"/>
</dbReference>
<dbReference type="GO" id="GO:0050566">
    <property type="term" value="F:asparaginyl-tRNA synthase (glutamine-hydrolyzing) activity"/>
    <property type="evidence" value="ECO:0007669"/>
    <property type="project" value="RHEA"/>
</dbReference>
<dbReference type="GO" id="GO:0005524">
    <property type="term" value="F:ATP binding"/>
    <property type="evidence" value="ECO:0007669"/>
    <property type="project" value="UniProtKB-KW"/>
</dbReference>
<dbReference type="GO" id="GO:0050567">
    <property type="term" value="F:glutaminyl-tRNA synthase (glutamine-hydrolyzing) activity"/>
    <property type="evidence" value="ECO:0007669"/>
    <property type="project" value="UniProtKB-UniRule"/>
</dbReference>
<dbReference type="GO" id="GO:0070681">
    <property type="term" value="P:glutaminyl-tRNAGln biosynthesis via transamidation"/>
    <property type="evidence" value="ECO:0007669"/>
    <property type="project" value="TreeGrafter"/>
</dbReference>
<dbReference type="GO" id="GO:0006412">
    <property type="term" value="P:translation"/>
    <property type="evidence" value="ECO:0007669"/>
    <property type="project" value="UniProtKB-UniRule"/>
</dbReference>
<dbReference type="FunFam" id="1.10.10.410:FF:000001">
    <property type="entry name" value="Aspartyl/glutamyl-tRNA(Asn/Gln) amidotransferase subunit B"/>
    <property type="match status" value="1"/>
</dbReference>
<dbReference type="FunFam" id="1.10.150.380:FF:000001">
    <property type="entry name" value="Aspartyl/glutamyl-tRNA(Asn/Gln) amidotransferase subunit B"/>
    <property type="match status" value="1"/>
</dbReference>
<dbReference type="Gene3D" id="1.10.10.410">
    <property type="match status" value="1"/>
</dbReference>
<dbReference type="Gene3D" id="1.10.150.380">
    <property type="entry name" value="GatB domain, N-terminal subdomain"/>
    <property type="match status" value="1"/>
</dbReference>
<dbReference type="HAMAP" id="MF_00121">
    <property type="entry name" value="GatB"/>
    <property type="match status" value="1"/>
</dbReference>
<dbReference type="InterPro" id="IPR017959">
    <property type="entry name" value="Asn/Gln-tRNA_amidoTrfase_suB/E"/>
</dbReference>
<dbReference type="InterPro" id="IPR006075">
    <property type="entry name" value="Asn/Gln-tRNA_Trfase_suB/E_cat"/>
</dbReference>
<dbReference type="InterPro" id="IPR018027">
    <property type="entry name" value="Asn/Gln_amidotransferase"/>
</dbReference>
<dbReference type="InterPro" id="IPR003789">
    <property type="entry name" value="Asn/Gln_tRNA_amidoTrase-B-like"/>
</dbReference>
<dbReference type="InterPro" id="IPR004413">
    <property type="entry name" value="GatB"/>
</dbReference>
<dbReference type="InterPro" id="IPR042114">
    <property type="entry name" value="GatB_C_1"/>
</dbReference>
<dbReference type="InterPro" id="IPR023168">
    <property type="entry name" value="GatB_Yqey_C_2"/>
</dbReference>
<dbReference type="InterPro" id="IPR017958">
    <property type="entry name" value="Gln-tRNA_amidoTrfase_suB_CS"/>
</dbReference>
<dbReference type="InterPro" id="IPR014746">
    <property type="entry name" value="Gln_synth/guanido_kin_cat_dom"/>
</dbReference>
<dbReference type="NCBIfam" id="TIGR00133">
    <property type="entry name" value="gatB"/>
    <property type="match status" value="1"/>
</dbReference>
<dbReference type="NCBIfam" id="NF004012">
    <property type="entry name" value="PRK05477.1-2"/>
    <property type="match status" value="1"/>
</dbReference>
<dbReference type="NCBIfam" id="NF004014">
    <property type="entry name" value="PRK05477.1-4"/>
    <property type="match status" value="1"/>
</dbReference>
<dbReference type="NCBIfam" id="NF004015">
    <property type="entry name" value="PRK05477.1-5"/>
    <property type="match status" value="1"/>
</dbReference>
<dbReference type="PANTHER" id="PTHR11659">
    <property type="entry name" value="GLUTAMYL-TRNA GLN AMIDOTRANSFERASE SUBUNIT B MITOCHONDRIAL AND PROKARYOTIC PET112-RELATED"/>
    <property type="match status" value="1"/>
</dbReference>
<dbReference type="PANTHER" id="PTHR11659:SF0">
    <property type="entry name" value="GLUTAMYL-TRNA(GLN) AMIDOTRANSFERASE SUBUNIT B, MITOCHONDRIAL"/>
    <property type="match status" value="1"/>
</dbReference>
<dbReference type="Pfam" id="PF02934">
    <property type="entry name" value="GatB_N"/>
    <property type="match status" value="1"/>
</dbReference>
<dbReference type="Pfam" id="PF02637">
    <property type="entry name" value="GatB_Yqey"/>
    <property type="match status" value="1"/>
</dbReference>
<dbReference type="SMART" id="SM00845">
    <property type="entry name" value="GatB_Yqey"/>
    <property type="match status" value="1"/>
</dbReference>
<dbReference type="SUPFAM" id="SSF89095">
    <property type="entry name" value="GatB/YqeY motif"/>
    <property type="match status" value="1"/>
</dbReference>
<dbReference type="SUPFAM" id="SSF55931">
    <property type="entry name" value="Glutamine synthetase/guanido kinase"/>
    <property type="match status" value="1"/>
</dbReference>
<dbReference type="PROSITE" id="PS01234">
    <property type="entry name" value="GATB"/>
    <property type="match status" value="1"/>
</dbReference>
<keyword id="KW-0067">ATP-binding</keyword>
<keyword id="KW-0436">Ligase</keyword>
<keyword id="KW-0547">Nucleotide-binding</keyword>
<keyword id="KW-0648">Protein biosynthesis</keyword>
<keyword id="KW-1185">Reference proteome</keyword>
<gene>
    <name evidence="1" type="primary">gatB</name>
    <name type="ordered locus">BAV3179</name>
</gene>
<name>GATB_BORA1</name>
<reference key="1">
    <citation type="journal article" date="2006" name="J. Bacteriol.">
        <title>Comparison of the genome sequence of the poultry pathogen Bordetella avium with those of B. bronchiseptica, B. pertussis, and B. parapertussis reveals extensive diversity in surface structures associated with host interaction.</title>
        <authorList>
            <person name="Sebaihia M."/>
            <person name="Preston A."/>
            <person name="Maskell D.J."/>
            <person name="Kuzmiak H."/>
            <person name="Connell T.D."/>
            <person name="King N.D."/>
            <person name="Orndorff P.E."/>
            <person name="Miyamoto D.M."/>
            <person name="Thomson N.R."/>
            <person name="Harris D."/>
            <person name="Goble A."/>
            <person name="Lord A."/>
            <person name="Murphy L."/>
            <person name="Quail M.A."/>
            <person name="Rutter S."/>
            <person name="Squares R."/>
            <person name="Squares S."/>
            <person name="Woodward J."/>
            <person name="Parkhill J."/>
            <person name="Temple L.M."/>
        </authorList>
    </citation>
    <scope>NUCLEOTIDE SEQUENCE [LARGE SCALE GENOMIC DNA]</scope>
    <source>
        <strain>197N</strain>
    </source>
</reference>
<accession>Q2KU71</accession>
<sequence length="485" mass="52905">MEWEIVIGLETHVQLATESKIFSGSSTRFGAAPNTQANEVDLALPGSLPVMNRGAAERAILFGLAIGAKIAPRSVFARKNYFYPDLPKGYQISQYELPVVVGGTLSFFVGEEEKTINLTRAHLEEDAGKSLHDEFHLANGAPASGIDLNRAGTPLLEIVTEPEMRSAAEAVAYARALHGLVVWLGICDGNMQEGSFRCDANVSVRPRGQVEFGTRAEIKNVNSFRFLERAIQYEVRRQIELIEDGGKVVQETRLYDAERDETRSMRSKEDAHDYRYFPDPDLPTLVIGQDWVEAVRATMPELPSAMRARFEADFGLPAYDAAQLTISRKLAAYFEAVARALPAGQAKLAANWIMGEVTATLNREEKDIADTPVQAAQLAALINRIIDGTISNKIARDVFAAMWAGENGGEPDAIIEARGLKQISDTGTISAMIDEVLAANPAIVAEYRAGKEKAFNSLVGQIMKAARGKANPQQVNDLLKAKLSA</sequence>